<reference key="1">
    <citation type="journal article" date="2011" name="J. Bacteriol.">
        <title>Genome of Ochrobactrum anthropi ATCC 49188 T, a versatile opportunistic pathogen and symbiont of several eukaryotic hosts.</title>
        <authorList>
            <person name="Chain P.S."/>
            <person name="Lang D.M."/>
            <person name="Comerci D.J."/>
            <person name="Malfatti S.A."/>
            <person name="Vergez L.M."/>
            <person name="Shin M."/>
            <person name="Ugalde R.A."/>
            <person name="Garcia E."/>
            <person name="Tolmasky M.E."/>
        </authorList>
    </citation>
    <scope>NUCLEOTIDE SEQUENCE [LARGE SCALE GENOMIC DNA]</scope>
    <source>
        <strain>ATCC 49188 / DSM 6882 / CCUG 24695 / JCM 21032 / LMG 3331 / NBRC 15819 / NCTC 12168 / Alc 37</strain>
    </source>
</reference>
<proteinExistence type="inferred from homology"/>
<dbReference type="EC" id="7.4.2.8" evidence="1"/>
<dbReference type="EMBL" id="CP000758">
    <property type="protein sequence ID" value="ABS13742.1"/>
    <property type="molecule type" value="Genomic_DNA"/>
</dbReference>
<dbReference type="RefSeq" id="WP_012091195.1">
    <property type="nucleotide sequence ID" value="NC_009667.1"/>
</dbReference>
<dbReference type="SMR" id="A6WXN8"/>
<dbReference type="STRING" id="439375.Oant_1021"/>
<dbReference type="KEGG" id="oan:Oant_1021"/>
<dbReference type="PATRIC" id="fig|439375.7.peg.1070"/>
<dbReference type="eggNOG" id="COG0653">
    <property type="taxonomic scope" value="Bacteria"/>
</dbReference>
<dbReference type="HOGENOM" id="CLU_005314_3_0_5"/>
<dbReference type="PhylomeDB" id="A6WXN8"/>
<dbReference type="Proteomes" id="UP000002301">
    <property type="component" value="Chromosome 1"/>
</dbReference>
<dbReference type="GO" id="GO:0031522">
    <property type="term" value="C:cell envelope Sec protein transport complex"/>
    <property type="evidence" value="ECO:0007669"/>
    <property type="project" value="TreeGrafter"/>
</dbReference>
<dbReference type="GO" id="GO:0005829">
    <property type="term" value="C:cytosol"/>
    <property type="evidence" value="ECO:0007669"/>
    <property type="project" value="TreeGrafter"/>
</dbReference>
<dbReference type="GO" id="GO:0005886">
    <property type="term" value="C:plasma membrane"/>
    <property type="evidence" value="ECO:0007669"/>
    <property type="project" value="UniProtKB-SubCell"/>
</dbReference>
<dbReference type="GO" id="GO:0005524">
    <property type="term" value="F:ATP binding"/>
    <property type="evidence" value="ECO:0007669"/>
    <property type="project" value="UniProtKB-UniRule"/>
</dbReference>
<dbReference type="GO" id="GO:0046872">
    <property type="term" value="F:metal ion binding"/>
    <property type="evidence" value="ECO:0007669"/>
    <property type="project" value="UniProtKB-KW"/>
</dbReference>
<dbReference type="GO" id="GO:0008564">
    <property type="term" value="F:protein-exporting ATPase activity"/>
    <property type="evidence" value="ECO:0007669"/>
    <property type="project" value="UniProtKB-EC"/>
</dbReference>
<dbReference type="GO" id="GO:0065002">
    <property type="term" value="P:intracellular protein transmembrane transport"/>
    <property type="evidence" value="ECO:0007669"/>
    <property type="project" value="UniProtKB-UniRule"/>
</dbReference>
<dbReference type="GO" id="GO:0017038">
    <property type="term" value="P:protein import"/>
    <property type="evidence" value="ECO:0007669"/>
    <property type="project" value="InterPro"/>
</dbReference>
<dbReference type="GO" id="GO:0006605">
    <property type="term" value="P:protein targeting"/>
    <property type="evidence" value="ECO:0007669"/>
    <property type="project" value="UniProtKB-UniRule"/>
</dbReference>
<dbReference type="GO" id="GO:0043952">
    <property type="term" value="P:protein transport by the Sec complex"/>
    <property type="evidence" value="ECO:0007669"/>
    <property type="project" value="TreeGrafter"/>
</dbReference>
<dbReference type="CDD" id="cd17928">
    <property type="entry name" value="DEXDc_SecA"/>
    <property type="match status" value="1"/>
</dbReference>
<dbReference type="CDD" id="cd18803">
    <property type="entry name" value="SF2_C_secA"/>
    <property type="match status" value="1"/>
</dbReference>
<dbReference type="FunFam" id="3.90.1440.10:FF:000001">
    <property type="entry name" value="Preprotein translocase subunit SecA"/>
    <property type="match status" value="1"/>
</dbReference>
<dbReference type="FunFam" id="1.10.3060.10:FF:000003">
    <property type="entry name" value="Protein translocase subunit SecA"/>
    <property type="match status" value="1"/>
</dbReference>
<dbReference type="FunFam" id="3.40.50.300:FF:000334">
    <property type="entry name" value="Protein translocase subunit SecA"/>
    <property type="match status" value="1"/>
</dbReference>
<dbReference type="FunFam" id="3.40.50.300:FF:001790">
    <property type="entry name" value="Protein translocase subunit SecA"/>
    <property type="match status" value="1"/>
</dbReference>
<dbReference type="Gene3D" id="3.10.450.50">
    <property type="match status" value="1"/>
</dbReference>
<dbReference type="Gene3D" id="1.10.3060.10">
    <property type="entry name" value="Helical scaffold and wing domains of SecA"/>
    <property type="match status" value="1"/>
</dbReference>
<dbReference type="Gene3D" id="3.40.50.300">
    <property type="entry name" value="P-loop containing nucleotide triphosphate hydrolases"/>
    <property type="match status" value="2"/>
</dbReference>
<dbReference type="Gene3D" id="3.90.1440.10">
    <property type="entry name" value="SecA, preprotein cross-linking domain"/>
    <property type="match status" value="1"/>
</dbReference>
<dbReference type="HAMAP" id="MF_01382">
    <property type="entry name" value="SecA"/>
    <property type="match status" value="1"/>
</dbReference>
<dbReference type="InterPro" id="IPR014001">
    <property type="entry name" value="Helicase_ATP-bd"/>
</dbReference>
<dbReference type="InterPro" id="IPR001650">
    <property type="entry name" value="Helicase_C-like"/>
</dbReference>
<dbReference type="InterPro" id="IPR027417">
    <property type="entry name" value="P-loop_NTPase"/>
</dbReference>
<dbReference type="InterPro" id="IPR004027">
    <property type="entry name" value="SEC_C_motif"/>
</dbReference>
<dbReference type="InterPro" id="IPR000185">
    <property type="entry name" value="SecA"/>
</dbReference>
<dbReference type="InterPro" id="IPR020937">
    <property type="entry name" value="SecA_CS"/>
</dbReference>
<dbReference type="InterPro" id="IPR011115">
    <property type="entry name" value="SecA_DEAD"/>
</dbReference>
<dbReference type="InterPro" id="IPR014018">
    <property type="entry name" value="SecA_motor_DEAD"/>
</dbReference>
<dbReference type="InterPro" id="IPR011130">
    <property type="entry name" value="SecA_preprotein_X-link_dom"/>
</dbReference>
<dbReference type="InterPro" id="IPR044722">
    <property type="entry name" value="SecA_SF2_C"/>
</dbReference>
<dbReference type="InterPro" id="IPR011116">
    <property type="entry name" value="SecA_Wing/Scaffold"/>
</dbReference>
<dbReference type="InterPro" id="IPR036266">
    <property type="entry name" value="SecA_Wing/Scaffold_sf"/>
</dbReference>
<dbReference type="InterPro" id="IPR036670">
    <property type="entry name" value="SecA_X-link_sf"/>
</dbReference>
<dbReference type="NCBIfam" id="NF009538">
    <property type="entry name" value="PRK12904.1"/>
    <property type="match status" value="1"/>
</dbReference>
<dbReference type="NCBIfam" id="TIGR00963">
    <property type="entry name" value="secA"/>
    <property type="match status" value="1"/>
</dbReference>
<dbReference type="PANTHER" id="PTHR30612:SF0">
    <property type="entry name" value="CHLOROPLAST PROTEIN-TRANSPORTING ATPASE"/>
    <property type="match status" value="1"/>
</dbReference>
<dbReference type="PANTHER" id="PTHR30612">
    <property type="entry name" value="SECA INNER MEMBRANE COMPONENT OF SEC PROTEIN SECRETION SYSTEM"/>
    <property type="match status" value="1"/>
</dbReference>
<dbReference type="Pfam" id="PF21090">
    <property type="entry name" value="P-loop_SecA"/>
    <property type="match status" value="1"/>
</dbReference>
<dbReference type="Pfam" id="PF02810">
    <property type="entry name" value="SEC-C"/>
    <property type="match status" value="1"/>
</dbReference>
<dbReference type="Pfam" id="PF07517">
    <property type="entry name" value="SecA_DEAD"/>
    <property type="match status" value="1"/>
</dbReference>
<dbReference type="Pfam" id="PF01043">
    <property type="entry name" value="SecA_PP_bind"/>
    <property type="match status" value="1"/>
</dbReference>
<dbReference type="Pfam" id="PF07516">
    <property type="entry name" value="SecA_SW"/>
    <property type="match status" value="1"/>
</dbReference>
<dbReference type="PRINTS" id="PR00906">
    <property type="entry name" value="SECA"/>
</dbReference>
<dbReference type="SMART" id="SM00957">
    <property type="entry name" value="SecA_DEAD"/>
    <property type="match status" value="1"/>
</dbReference>
<dbReference type="SMART" id="SM00958">
    <property type="entry name" value="SecA_PP_bind"/>
    <property type="match status" value="1"/>
</dbReference>
<dbReference type="SUPFAM" id="SSF81886">
    <property type="entry name" value="Helical scaffold and wing domains of SecA"/>
    <property type="match status" value="1"/>
</dbReference>
<dbReference type="SUPFAM" id="SSF52540">
    <property type="entry name" value="P-loop containing nucleoside triphosphate hydrolases"/>
    <property type="match status" value="2"/>
</dbReference>
<dbReference type="SUPFAM" id="SSF81767">
    <property type="entry name" value="Pre-protein crosslinking domain of SecA"/>
    <property type="match status" value="1"/>
</dbReference>
<dbReference type="PROSITE" id="PS01312">
    <property type="entry name" value="SECA"/>
    <property type="match status" value="1"/>
</dbReference>
<dbReference type="PROSITE" id="PS51196">
    <property type="entry name" value="SECA_MOTOR_DEAD"/>
    <property type="match status" value="1"/>
</dbReference>
<feature type="chain" id="PRO_0000320876" description="Protein translocase subunit SecA">
    <location>
        <begin position="1"/>
        <end position="906"/>
    </location>
</feature>
<feature type="region of interest" description="Disordered" evidence="2">
    <location>
        <begin position="829"/>
        <end position="898"/>
    </location>
</feature>
<feature type="compositionally biased region" description="Basic and acidic residues" evidence="2">
    <location>
        <begin position="858"/>
        <end position="877"/>
    </location>
</feature>
<feature type="binding site" evidence="1">
    <location>
        <position position="89"/>
    </location>
    <ligand>
        <name>ATP</name>
        <dbReference type="ChEBI" id="CHEBI:30616"/>
    </ligand>
</feature>
<feature type="binding site" evidence="1">
    <location>
        <begin position="107"/>
        <end position="111"/>
    </location>
    <ligand>
        <name>ATP</name>
        <dbReference type="ChEBI" id="CHEBI:30616"/>
    </ligand>
</feature>
<feature type="binding site" evidence="1">
    <location>
        <position position="502"/>
    </location>
    <ligand>
        <name>ATP</name>
        <dbReference type="ChEBI" id="CHEBI:30616"/>
    </ligand>
</feature>
<feature type="binding site" evidence="1">
    <location>
        <position position="890"/>
    </location>
    <ligand>
        <name>Zn(2+)</name>
        <dbReference type="ChEBI" id="CHEBI:29105"/>
    </ligand>
</feature>
<feature type="binding site" evidence="1">
    <location>
        <position position="892"/>
    </location>
    <ligand>
        <name>Zn(2+)</name>
        <dbReference type="ChEBI" id="CHEBI:29105"/>
    </ligand>
</feature>
<feature type="binding site" evidence="1">
    <location>
        <position position="901"/>
    </location>
    <ligand>
        <name>Zn(2+)</name>
        <dbReference type="ChEBI" id="CHEBI:29105"/>
    </ligand>
</feature>
<feature type="binding site" evidence="1">
    <location>
        <position position="902"/>
    </location>
    <ligand>
        <name>Zn(2+)</name>
        <dbReference type="ChEBI" id="CHEBI:29105"/>
    </ligand>
</feature>
<keyword id="KW-0067">ATP-binding</keyword>
<keyword id="KW-0997">Cell inner membrane</keyword>
<keyword id="KW-1003">Cell membrane</keyword>
<keyword id="KW-0963">Cytoplasm</keyword>
<keyword id="KW-0472">Membrane</keyword>
<keyword id="KW-0479">Metal-binding</keyword>
<keyword id="KW-0547">Nucleotide-binding</keyword>
<keyword id="KW-0653">Protein transport</keyword>
<keyword id="KW-1185">Reference proteome</keyword>
<keyword id="KW-1278">Translocase</keyword>
<keyword id="KW-0811">Translocation</keyword>
<keyword id="KW-0813">Transport</keyword>
<keyword id="KW-0862">Zinc</keyword>
<name>SECA_BRUA4</name>
<protein>
    <recommendedName>
        <fullName evidence="1">Protein translocase subunit SecA</fullName>
        <ecNumber evidence="1">7.4.2.8</ecNumber>
    </recommendedName>
</protein>
<organism>
    <name type="scientific">Brucella anthropi (strain ATCC 49188 / DSM 6882 / CCUG 24695 / JCM 21032 / LMG 3331 / NBRC 15819 / NCTC 12168 / Alc 37)</name>
    <name type="common">Ochrobactrum anthropi</name>
    <dbReference type="NCBI Taxonomy" id="439375"/>
    <lineage>
        <taxon>Bacteria</taxon>
        <taxon>Pseudomonadati</taxon>
        <taxon>Pseudomonadota</taxon>
        <taxon>Alphaproteobacteria</taxon>
        <taxon>Hyphomicrobiales</taxon>
        <taxon>Brucellaceae</taxon>
        <taxon>Brucella/Ochrobactrum group</taxon>
        <taxon>Brucella</taxon>
    </lineage>
</organism>
<comment type="function">
    <text evidence="1">Part of the Sec protein translocase complex. Interacts with the SecYEG preprotein conducting channel. Has a central role in coupling the hydrolysis of ATP to the transfer of proteins into and across the cell membrane, serving both as a receptor for the preprotein-SecB complex and as an ATP-driven molecular motor driving the stepwise translocation of polypeptide chains across the membrane.</text>
</comment>
<comment type="catalytic activity">
    <reaction evidence="1">
        <text>ATP + H2O + cellular proteinSide 1 = ADP + phosphate + cellular proteinSide 2.</text>
        <dbReference type="EC" id="7.4.2.8"/>
    </reaction>
</comment>
<comment type="cofactor">
    <cofactor evidence="1">
        <name>Zn(2+)</name>
        <dbReference type="ChEBI" id="CHEBI:29105"/>
    </cofactor>
    <text evidence="1">May bind 1 zinc ion per subunit.</text>
</comment>
<comment type="subunit">
    <text evidence="1">Monomer and homodimer. Part of the essential Sec protein translocation apparatus which comprises SecA, SecYEG and auxiliary proteins SecDF-YajC and YidC.</text>
</comment>
<comment type="subcellular location">
    <subcellularLocation>
        <location evidence="1">Cell inner membrane</location>
        <topology evidence="1">Peripheral membrane protein</topology>
        <orientation evidence="1">Cytoplasmic side</orientation>
    </subcellularLocation>
    <subcellularLocation>
        <location evidence="1">Cytoplasm</location>
    </subcellularLocation>
    <text evidence="1">Distribution is 50-50.</text>
</comment>
<comment type="similarity">
    <text evidence="1">Belongs to the SecA family.</text>
</comment>
<gene>
    <name evidence="1" type="primary">secA</name>
    <name type="ordered locus">Oant_1021</name>
</gene>
<sequence length="906" mass="102895">MVSFGGFARKIFGSSNDRRVKTLRQRANQITAIEKNYENLTDEQLQAKTAEFRAALAGGKTLDSLLPDAFATAREAAKRVLGMRPFDVQLIGGMVLHERGIAEMRTGEGKTLMATLPVYLNALEGKGVHVVTVNDYLATRDAETMGKLYNFLGLTVGVIKHGLDDDERRAAYACDITYGTNNELGFDYLRDNMKYERAQMVQRPHNYAIVDEVDSILIDEARTPLIISGPLEDRSDFYNLIDTFIPALEPEDFEIDEKQKTAIFTEVGTEKVEQLLEAAGHLKGESLYDIENVAVVHHLNNALRAHKLFQRDKDYIVRNDEIVIIDEFTGRMMPGRRYSEGLHQALEAKEHVTIQPENQTLASITFQNYFRMYNKLSGMTGTAATEAEEFGNIYGLEVLEIPTNLPVQRIDEDDEVYRSVEEKYRAIVRDIRASHEKGQPILVGTTSIEKSEQLAERLRKEGIKEFQVLNARYHEQEAYIIAQAGVPGTVTIATNMAGRGTDIQLGGNLEMRVRQELSDIPEGPERDAKIAEIKADIAQLKEKALAAGGLYVLATERHESRRIDNQLRGRSGRQGDPGRSKFFLSLQDDLMRIFGSDRMDSMLQKLGLKEDEAIVHPWINKALEKAQKKVEARNFEIRKNLLKYDDVMNDQRKVIFEQRLEMMDEEDLTETVGEMRHEVIEDMVALRIPKDAYAEKWDIAGLKEDIISKLNLDLPVEDWAKEEGIAEEEFENRIKEAADKAAAEKAERFGPQIMTYVEKSVIMQSLDNLWREHLVNLDHLRSVVGFRGYAQRDPLNEYKTEAFELFQSMLANLREVVISQLMRVEIVREAPPEPELPPMTGRHIDSTTGENDFDEASWSDHQHDERNVPAAERDPADPRTWGKVSRNEACPCGSGKKYKHCHGAFE</sequence>
<evidence type="ECO:0000255" key="1">
    <source>
        <dbReference type="HAMAP-Rule" id="MF_01382"/>
    </source>
</evidence>
<evidence type="ECO:0000256" key="2">
    <source>
        <dbReference type="SAM" id="MobiDB-lite"/>
    </source>
</evidence>
<accession>A6WXN8</accession>